<name>KAD5_ARATH</name>
<comment type="function">
    <text evidence="4">Catalyzes the reversible transfer of the terminal phosphate group between ATP and AMP.</text>
</comment>
<comment type="catalytic activity">
    <reaction evidence="4">
        <text>AMP + ATP = 2 ADP</text>
        <dbReference type="Rhea" id="RHEA:12973"/>
        <dbReference type="ChEBI" id="CHEBI:30616"/>
        <dbReference type="ChEBI" id="CHEBI:456215"/>
        <dbReference type="ChEBI" id="CHEBI:456216"/>
        <dbReference type="EC" id="2.7.4.3"/>
    </reaction>
</comment>
<comment type="subunit">
    <text evidence="1">Monomer.</text>
</comment>
<comment type="subcellular location">
    <subcellularLocation>
        <location evidence="4">Plastid</location>
        <location evidence="4">Chloroplast</location>
    </subcellularLocation>
</comment>
<comment type="alternative products">
    <event type="alternative splicing"/>
    <isoform>
        <id>Q8VYL1-1</id>
        <name>1</name>
        <sequence type="displayed"/>
    </isoform>
    <text>A number of isoforms are produced. According to EST sequences.</text>
</comment>
<comment type="disruption phenotype">
    <text evidence="4">No visible phenotype under normal growth conditions.</text>
</comment>
<comment type="similarity">
    <text evidence="5">Belongs to the adenylate kinase family.</text>
</comment>
<feature type="transit peptide" description="Chloroplast" evidence="2">
    <location>
        <begin position="1"/>
        <end position="73"/>
    </location>
</feature>
<feature type="chain" id="PRO_0000430114" description="Adenylate kinase 5, chloroplastic">
    <location>
        <begin position="74"/>
        <end position="588"/>
    </location>
</feature>
<feature type="region of interest" description="Disordered" evidence="3">
    <location>
        <begin position="1"/>
        <end position="34"/>
    </location>
</feature>
<feature type="region of interest" description="NMP" evidence="1">
    <location>
        <begin position="109"/>
        <end position="138"/>
    </location>
</feature>
<feature type="region of interest" description="LID" evidence="1">
    <location>
        <begin position="202"/>
        <end position="235"/>
    </location>
</feature>
<feature type="binding site" evidence="1">
    <location>
        <begin position="89"/>
        <end position="94"/>
    </location>
    <ligand>
        <name>ATP</name>
        <dbReference type="ChEBI" id="CHEBI:30616"/>
    </ligand>
</feature>
<feature type="binding site" evidence="1">
    <location>
        <position position="115"/>
    </location>
    <ligand>
        <name>AMP</name>
        <dbReference type="ChEBI" id="CHEBI:456215"/>
    </ligand>
</feature>
<feature type="binding site" evidence="1">
    <location>
        <begin position="136"/>
        <end position="138"/>
    </location>
    <ligand>
        <name>AMP</name>
        <dbReference type="ChEBI" id="CHEBI:456215"/>
    </ligand>
</feature>
<feature type="binding site" evidence="1">
    <location>
        <begin position="165"/>
        <end position="168"/>
    </location>
    <ligand>
        <name>AMP</name>
        <dbReference type="ChEBI" id="CHEBI:456215"/>
    </ligand>
</feature>
<feature type="binding site" evidence="1">
    <location>
        <position position="172"/>
    </location>
    <ligand>
        <name>AMP</name>
        <dbReference type="ChEBI" id="CHEBI:456215"/>
    </ligand>
</feature>
<feature type="binding site" evidence="1">
    <location>
        <position position="203"/>
    </location>
    <ligand>
        <name>ATP</name>
        <dbReference type="ChEBI" id="CHEBI:30616"/>
    </ligand>
</feature>
<feature type="binding site" evidence="1">
    <location>
        <position position="232"/>
    </location>
    <ligand>
        <name>AMP</name>
        <dbReference type="ChEBI" id="CHEBI:456215"/>
    </ligand>
</feature>
<feature type="binding site" evidence="1">
    <location>
        <position position="243"/>
    </location>
    <ligand>
        <name>AMP</name>
        <dbReference type="ChEBI" id="CHEBI:456215"/>
    </ligand>
</feature>
<proteinExistence type="evidence at protein level"/>
<evidence type="ECO:0000250" key="1">
    <source>
        <dbReference type="UniProtKB" id="P69441"/>
    </source>
</evidence>
<evidence type="ECO:0000255" key="2"/>
<evidence type="ECO:0000256" key="3">
    <source>
        <dbReference type="SAM" id="MobiDB-lite"/>
    </source>
</evidence>
<evidence type="ECO:0000269" key="4">
    <source>
    </source>
</evidence>
<evidence type="ECO:0000305" key="5"/>
<protein>
    <recommendedName>
        <fullName>Adenylate kinase 5, chloroplastic</fullName>
        <ecNumber>2.7.4.3</ecNumber>
    </recommendedName>
    <alternativeName>
        <fullName>ATP-AMP transphosphorylase 5</fullName>
    </alternativeName>
    <alternativeName>
        <fullName>ATP:AMP phosphotransferase</fullName>
    </alternativeName>
    <alternativeName>
        <fullName>Adenylate monophosphate kinase 5</fullName>
        <shortName>AMK5</shortName>
    </alternativeName>
</protein>
<keyword id="KW-0025">Alternative splicing</keyword>
<keyword id="KW-0067">ATP-binding</keyword>
<keyword id="KW-0150">Chloroplast</keyword>
<keyword id="KW-0418">Kinase</keyword>
<keyword id="KW-0547">Nucleotide-binding</keyword>
<keyword id="KW-0934">Plastid</keyword>
<keyword id="KW-1185">Reference proteome</keyword>
<keyword id="KW-0808">Transferase</keyword>
<keyword id="KW-0809">Transit peptide</keyword>
<dbReference type="EC" id="2.7.4.3"/>
<dbReference type="EMBL" id="AP000421">
    <property type="protein sequence ID" value="BAB10023.1"/>
    <property type="molecule type" value="Genomic_DNA"/>
</dbReference>
<dbReference type="EMBL" id="AP002031">
    <property type="protein sequence ID" value="BAB11193.1"/>
    <property type="molecule type" value="Genomic_DNA"/>
</dbReference>
<dbReference type="EMBL" id="AP000421">
    <property type="protein sequence ID" value="BAB11193.1"/>
    <property type="status" value="JOINED"/>
    <property type="molecule type" value="Genomic_DNA"/>
</dbReference>
<dbReference type="EMBL" id="CP002688">
    <property type="protein sequence ID" value="AED93936.1"/>
    <property type="molecule type" value="Genomic_DNA"/>
</dbReference>
<dbReference type="EMBL" id="AY070456">
    <property type="protein sequence ID" value="AAL49859.1"/>
    <property type="molecule type" value="mRNA"/>
</dbReference>
<dbReference type="EMBL" id="AY133763">
    <property type="protein sequence ID" value="AAM91697.1"/>
    <property type="molecule type" value="mRNA"/>
</dbReference>
<dbReference type="EMBL" id="AK226238">
    <property type="protein sequence ID" value="BAE98401.1"/>
    <property type="molecule type" value="mRNA"/>
</dbReference>
<dbReference type="RefSeq" id="NP_198367.2">
    <molecule id="Q8VYL1-1"/>
    <property type="nucleotide sequence ID" value="NM_122908.4"/>
</dbReference>
<dbReference type="SMR" id="Q8VYL1"/>
<dbReference type="BioGRID" id="18726">
    <property type="interactions" value="1"/>
</dbReference>
<dbReference type="FunCoup" id="Q8VYL1">
    <property type="interactions" value="1823"/>
</dbReference>
<dbReference type="STRING" id="3702.Q8VYL1"/>
<dbReference type="GlyGen" id="Q8VYL1">
    <property type="glycosylation" value="1 site"/>
</dbReference>
<dbReference type="iPTMnet" id="Q8VYL1"/>
<dbReference type="PaxDb" id="3702-AT5G35170.1"/>
<dbReference type="ProteomicsDB" id="250628">
    <molecule id="Q8VYL1-1"/>
</dbReference>
<dbReference type="EnsemblPlants" id="AT5G35170.1">
    <molecule id="Q8VYL1-1"/>
    <property type="protein sequence ID" value="AT5G35170.1"/>
    <property type="gene ID" value="AT5G35170"/>
</dbReference>
<dbReference type="GeneID" id="833471"/>
<dbReference type="Gramene" id="AT5G35170.1">
    <molecule id="Q8VYL1-1"/>
    <property type="protein sequence ID" value="AT5G35170.1"/>
    <property type="gene ID" value="AT5G35170"/>
</dbReference>
<dbReference type="KEGG" id="ath:AT5G35170"/>
<dbReference type="Araport" id="AT5G35170"/>
<dbReference type="TAIR" id="AT5G35170"/>
<dbReference type="eggNOG" id="KOG3078">
    <property type="taxonomic scope" value="Eukaryota"/>
</dbReference>
<dbReference type="InParanoid" id="Q8VYL1"/>
<dbReference type="OMA" id="WGEYGAK"/>
<dbReference type="PhylomeDB" id="Q8VYL1"/>
<dbReference type="BioCyc" id="ARA:AT5G35170-MONOMER"/>
<dbReference type="BRENDA" id="2.7.4.3">
    <property type="organism ID" value="399"/>
</dbReference>
<dbReference type="PRO" id="PR:Q8VYL1"/>
<dbReference type="Proteomes" id="UP000006548">
    <property type="component" value="Chromosome 5"/>
</dbReference>
<dbReference type="ExpressionAtlas" id="Q8VYL1">
    <property type="expression patterns" value="baseline and differential"/>
</dbReference>
<dbReference type="GO" id="GO:0009507">
    <property type="term" value="C:chloroplast"/>
    <property type="evidence" value="ECO:0000314"/>
    <property type="project" value="UniProtKB"/>
</dbReference>
<dbReference type="GO" id="GO:0009941">
    <property type="term" value="C:chloroplast envelope"/>
    <property type="evidence" value="ECO:0007005"/>
    <property type="project" value="TAIR"/>
</dbReference>
<dbReference type="GO" id="GO:0009534">
    <property type="term" value="C:chloroplast thylakoid"/>
    <property type="evidence" value="ECO:0007005"/>
    <property type="project" value="TAIR"/>
</dbReference>
<dbReference type="GO" id="GO:0009535">
    <property type="term" value="C:chloroplast thylakoid membrane"/>
    <property type="evidence" value="ECO:0007005"/>
    <property type="project" value="TAIR"/>
</dbReference>
<dbReference type="GO" id="GO:0009536">
    <property type="term" value="C:plastid"/>
    <property type="evidence" value="ECO:0007005"/>
    <property type="project" value="TAIR"/>
</dbReference>
<dbReference type="GO" id="GO:0004017">
    <property type="term" value="F:adenylate kinase activity"/>
    <property type="evidence" value="ECO:0000314"/>
    <property type="project" value="UniProtKB"/>
</dbReference>
<dbReference type="GO" id="GO:0005524">
    <property type="term" value="F:ATP binding"/>
    <property type="evidence" value="ECO:0007669"/>
    <property type="project" value="UniProtKB-KW"/>
</dbReference>
<dbReference type="CDD" id="cd01428">
    <property type="entry name" value="ADK"/>
    <property type="match status" value="1"/>
</dbReference>
<dbReference type="FunFam" id="3.40.50.300:FF:001694">
    <property type="entry name" value="Adenylate kinase, chloroplastic"/>
    <property type="match status" value="1"/>
</dbReference>
<dbReference type="Gene3D" id="3.40.50.300">
    <property type="entry name" value="P-loop containing nucleotide triphosphate hydrolases"/>
    <property type="match status" value="1"/>
</dbReference>
<dbReference type="HAMAP" id="MF_00235">
    <property type="entry name" value="Adenylate_kinase_Adk"/>
    <property type="match status" value="1"/>
</dbReference>
<dbReference type="InterPro" id="IPR006259">
    <property type="entry name" value="Adenyl_kin_sub"/>
</dbReference>
<dbReference type="InterPro" id="IPR000850">
    <property type="entry name" value="Adenylat/UMP-CMP_kin"/>
</dbReference>
<dbReference type="InterPro" id="IPR033690">
    <property type="entry name" value="Adenylat_kinase_CS"/>
</dbReference>
<dbReference type="InterPro" id="IPR036193">
    <property type="entry name" value="ADK_active_lid_dom_sf"/>
</dbReference>
<dbReference type="InterPro" id="IPR053021">
    <property type="entry name" value="Chloroplast_ADK"/>
</dbReference>
<dbReference type="InterPro" id="IPR018962">
    <property type="entry name" value="DUF1995"/>
</dbReference>
<dbReference type="InterPro" id="IPR027417">
    <property type="entry name" value="P-loop_NTPase"/>
</dbReference>
<dbReference type="NCBIfam" id="TIGR01351">
    <property type="entry name" value="adk"/>
    <property type="match status" value="1"/>
</dbReference>
<dbReference type="PANTHER" id="PTHR35509:SF6">
    <property type="entry name" value="ADENYLATE KINASE"/>
    <property type="match status" value="1"/>
</dbReference>
<dbReference type="PANTHER" id="PTHR35509">
    <property type="entry name" value="DOMAIN PROTEIN, PUTATIVE (DUF1995)-RELATED"/>
    <property type="match status" value="1"/>
</dbReference>
<dbReference type="Pfam" id="PF00406">
    <property type="entry name" value="ADK"/>
    <property type="match status" value="1"/>
</dbReference>
<dbReference type="Pfam" id="PF09353">
    <property type="entry name" value="DUF1995"/>
    <property type="match status" value="1"/>
</dbReference>
<dbReference type="PRINTS" id="PR00094">
    <property type="entry name" value="ADENYLTKNASE"/>
</dbReference>
<dbReference type="SUPFAM" id="SSF57774">
    <property type="entry name" value="Microbial and mitochondrial ADK, insert 'zinc finger' domain"/>
    <property type="match status" value="1"/>
</dbReference>
<dbReference type="SUPFAM" id="SSF52540">
    <property type="entry name" value="P-loop containing nucleoside triphosphate hydrolases"/>
    <property type="match status" value="1"/>
</dbReference>
<dbReference type="PROSITE" id="PS00113">
    <property type="entry name" value="ADENYLATE_KINASE"/>
    <property type="match status" value="1"/>
</dbReference>
<gene>
    <name type="ordered locus">At5g35170</name>
    <name type="ORF">T25C13.50</name>
</gene>
<accession>Q8VYL1</accession>
<accession>Q9FYQ6</accession>
<accession>Q9FYQ7</accession>
<organism>
    <name type="scientific">Arabidopsis thaliana</name>
    <name type="common">Mouse-ear cress</name>
    <dbReference type="NCBI Taxonomy" id="3702"/>
    <lineage>
        <taxon>Eukaryota</taxon>
        <taxon>Viridiplantae</taxon>
        <taxon>Streptophyta</taxon>
        <taxon>Embryophyta</taxon>
        <taxon>Tracheophyta</taxon>
        <taxon>Spermatophyta</taxon>
        <taxon>Magnoliopsida</taxon>
        <taxon>eudicotyledons</taxon>
        <taxon>Gunneridae</taxon>
        <taxon>Pentapetalae</taxon>
        <taxon>rosids</taxon>
        <taxon>malvids</taxon>
        <taxon>Brassicales</taxon>
        <taxon>Brassicaceae</taxon>
        <taxon>Camelineae</taxon>
        <taxon>Arabidopsis</taxon>
    </lineage>
</organism>
<reference key="1">
    <citation type="submission" date="2000-05" db="EMBL/GenBank/DDBJ databases">
        <title>Structural analysis of Arabidopsis thaliana chromosome 5. XI.</title>
        <authorList>
            <person name="Kaneko T."/>
            <person name="Katoh T."/>
            <person name="Asamizu E."/>
            <person name="Sato S."/>
            <person name="Nakamura Y."/>
            <person name="Kotani H."/>
            <person name="Tabata S."/>
        </authorList>
    </citation>
    <scope>NUCLEOTIDE SEQUENCE [LARGE SCALE GENOMIC DNA]</scope>
    <source>
        <strain>cv. Columbia</strain>
    </source>
</reference>
<reference key="2">
    <citation type="journal article" date="2017" name="Plant J.">
        <title>Araport11: a complete reannotation of the Arabidopsis thaliana reference genome.</title>
        <authorList>
            <person name="Cheng C.Y."/>
            <person name="Krishnakumar V."/>
            <person name="Chan A.P."/>
            <person name="Thibaud-Nissen F."/>
            <person name="Schobel S."/>
            <person name="Town C.D."/>
        </authorList>
    </citation>
    <scope>GENOME REANNOTATION</scope>
    <source>
        <strain>cv. Columbia</strain>
    </source>
</reference>
<reference key="3">
    <citation type="journal article" date="2003" name="Science">
        <title>Empirical analysis of transcriptional activity in the Arabidopsis genome.</title>
        <authorList>
            <person name="Yamada K."/>
            <person name="Lim J."/>
            <person name="Dale J.M."/>
            <person name="Chen H."/>
            <person name="Shinn P."/>
            <person name="Palm C.J."/>
            <person name="Southwick A.M."/>
            <person name="Wu H.C."/>
            <person name="Kim C.J."/>
            <person name="Nguyen M."/>
            <person name="Pham P.K."/>
            <person name="Cheuk R.F."/>
            <person name="Karlin-Newmann G."/>
            <person name="Liu S.X."/>
            <person name="Lam B."/>
            <person name="Sakano H."/>
            <person name="Wu T."/>
            <person name="Yu G."/>
            <person name="Miranda M."/>
            <person name="Quach H.L."/>
            <person name="Tripp M."/>
            <person name="Chang C.H."/>
            <person name="Lee J.M."/>
            <person name="Toriumi M.J."/>
            <person name="Chan M.M."/>
            <person name="Tang C.C."/>
            <person name="Onodera C.S."/>
            <person name="Deng J.M."/>
            <person name="Akiyama K."/>
            <person name="Ansari Y."/>
            <person name="Arakawa T."/>
            <person name="Banh J."/>
            <person name="Banno F."/>
            <person name="Bowser L."/>
            <person name="Brooks S.Y."/>
            <person name="Carninci P."/>
            <person name="Chao Q."/>
            <person name="Choy N."/>
            <person name="Enju A."/>
            <person name="Goldsmith A.D."/>
            <person name="Gurjal M."/>
            <person name="Hansen N.F."/>
            <person name="Hayashizaki Y."/>
            <person name="Johnson-Hopson C."/>
            <person name="Hsuan V.W."/>
            <person name="Iida K."/>
            <person name="Karnes M."/>
            <person name="Khan S."/>
            <person name="Koesema E."/>
            <person name="Ishida J."/>
            <person name="Jiang P.X."/>
            <person name="Jones T."/>
            <person name="Kawai J."/>
            <person name="Kamiya A."/>
            <person name="Meyers C."/>
            <person name="Nakajima M."/>
            <person name="Narusaka M."/>
            <person name="Seki M."/>
            <person name="Sakurai T."/>
            <person name="Satou M."/>
            <person name="Tamse R."/>
            <person name="Vaysberg M."/>
            <person name="Wallender E.K."/>
            <person name="Wong C."/>
            <person name="Yamamura Y."/>
            <person name="Yuan S."/>
            <person name="Shinozaki K."/>
            <person name="Davis R.W."/>
            <person name="Theologis A."/>
            <person name="Ecker J.R."/>
        </authorList>
    </citation>
    <scope>NUCLEOTIDE SEQUENCE [LARGE SCALE MRNA]</scope>
    <source>
        <strain>cv. Columbia</strain>
    </source>
</reference>
<reference key="4">
    <citation type="submission" date="2006-07" db="EMBL/GenBank/DDBJ databases">
        <title>Large-scale analysis of RIKEN Arabidopsis full-length (RAFL) cDNAs.</title>
        <authorList>
            <person name="Totoki Y."/>
            <person name="Seki M."/>
            <person name="Ishida J."/>
            <person name="Nakajima M."/>
            <person name="Enju A."/>
            <person name="Kamiya A."/>
            <person name="Narusaka M."/>
            <person name="Shin-i T."/>
            <person name="Nakagawa M."/>
            <person name="Sakamoto N."/>
            <person name="Oishi K."/>
            <person name="Kohara Y."/>
            <person name="Kobayashi M."/>
            <person name="Toyoda A."/>
            <person name="Sakaki Y."/>
            <person name="Sakurai T."/>
            <person name="Iida K."/>
            <person name="Akiyama K."/>
            <person name="Satou M."/>
            <person name="Toyoda T."/>
            <person name="Konagaya A."/>
            <person name="Carninci P."/>
            <person name="Kawai J."/>
            <person name="Hayashizaki Y."/>
            <person name="Shinozaki K."/>
        </authorList>
    </citation>
    <scope>NUCLEOTIDE SEQUENCE [LARGE SCALE MRNA]</scope>
    <source>
        <strain>cv. Columbia</strain>
    </source>
</reference>
<reference key="5">
    <citation type="journal article" date="2008" name="Plant Physiol.">
        <title>Functions of chloroplastic adenylate kinases in Arabidopsis.</title>
        <authorList>
            <person name="Lange P.R."/>
            <person name="Geserick C."/>
            <person name="Tischendorf G."/>
            <person name="Zrenner R."/>
        </authorList>
    </citation>
    <scope>FUNCTION</scope>
    <scope>CATALYTIC ACTIVITY</scope>
    <scope>SUBCELLULAR LOCATION</scope>
    <scope>DISRUPTION PHENOTYPE</scope>
</reference>
<sequence length="588" mass="65738">MASLSLSSAHFSSTSSSSRSSISTSSLSPSSTSLPLLQSPIRRRYRSLRRRLSFSVIPRRTSRSFSTSNSQIRCSINEPLKVMISGAPASGKGTQCELIVHKFGLVHISTGDLLRAEVSSGTDIGKRAKEFMNSGSLVPDEIVIAMVAGRLSREDAKEHGWLLDGFPRSFAQAQSLDKLNVKPDIFILLDVPDEILIDRCVGRRLDPVTGKIYHIKNYPPESDEIKARLVTRPDDTEEKVKARLQIYKQNSEAIISAYSDVMVKIDANRPKEVVFEETQTLLSQIQLKRMIKTDKASPVQDKWRGIPTRLNNIPHSRDIRAYFYEDVLQATIRSIKDGNTRLRVDINIPELNPEMDVYRIGTLMELVQALALSFADDGKRVKVCVQGSMGEGALAGMPLQLAGTRKILEYMDWGDDETLGTFVKLGAIGGKEVDEEDDMFILVAPQNAVGNCIIDDLQAMTTAAGKRPVVLINPRLKDLPASSGIMQTMGREQRLEYALTFDNCYVFRLLYYLGTQYPIMGALRMSYPYRYELYKRVNEENGKEKYVLLATYAERPTPEQIDDAFSGKSRDQSKKASGIWGFLSSVFS</sequence>